<name>Y3170_BURP1</name>
<protein>
    <recommendedName>
        <fullName evidence="1">UPF0301 protein BURPS1710b_3170</fullName>
    </recommendedName>
</protein>
<feature type="chain" id="PRO_0000258809" description="UPF0301 protein BURPS1710b_3170">
    <location>
        <begin position="1"/>
        <end position="192"/>
    </location>
</feature>
<comment type="similarity">
    <text evidence="1">Belongs to the UPF0301 (AlgH) family.</text>
</comment>
<comment type="sequence caution" evidence="2">
    <conflict type="erroneous initiation">
        <sequence resource="EMBL-CDS" id="ABA50510"/>
    </conflict>
</comment>
<gene>
    <name type="ordered locus">BURPS1710b_3170</name>
</gene>
<organism>
    <name type="scientific">Burkholderia pseudomallei (strain 1710b)</name>
    <dbReference type="NCBI Taxonomy" id="320372"/>
    <lineage>
        <taxon>Bacteria</taxon>
        <taxon>Pseudomonadati</taxon>
        <taxon>Pseudomonadota</taxon>
        <taxon>Betaproteobacteria</taxon>
        <taxon>Burkholderiales</taxon>
        <taxon>Burkholderiaceae</taxon>
        <taxon>Burkholderia</taxon>
        <taxon>pseudomallei group</taxon>
    </lineage>
</organism>
<dbReference type="EMBL" id="CP000124">
    <property type="protein sequence ID" value="ABA50510.1"/>
    <property type="status" value="ALT_INIT"/>
    <property type="molecule type" value="Genomic_DNA"/>
</dbReference>
<dbReference type="RefSeq" id="WP_004185441.1">
    <property type="nucleotide sequence ID" value="NC_007434.1"/>
</dbReference>
<dbReference type="SMR" id="Q3JPG1"/>
<dbReference type="EnsemblBacteria" id="ABA50510">
    <property type="protein sequence ID" value="ABA50510"/>
    <property type="gene ID" value="BURPS1710b_3170"/>
</dbReference>
<dbReference type="KEGG" id="bpm:BURPS1710b_3170"/>
<dbReference type="HOGENOM" id="CLU_057596_1_0_4"/>
<dbReference type="Proteomes" id="UP000002700">
    <property type="component" value="Chromosome I"/>
</dbReference>
<dbReference type="GO" id="GO:0005829">
    <property type="term" value="C:cytosol"/>
    <property type="evidence" value="ECO:0007669"/>
    <property type="project" value="TreeGrafter"/>
</dbReference>
<dbReference type="Gene3D" id="3.40.1740.10">
    <property type="entry name" value="VC0467-like"/>
    <property type="match status" value="1"/>
</dbReference>
<dbReference type="HAMAP" id="MF_00758">
    <property type="entry name" value="UPF0301"/>
    <property type="match status" value="1"/>
</dbReference>
<dbReference type="InterPro" id="IPR003774">
    <property type="entry name" value="AlgH-like"/>
</dbReference>
<dbReference type="NCBIfam" id="NF001266">
    <property type="entry name" value="PRK00228.1-1"/>
    <property type="match status" value="1"/>
</dbReference>
<dbReference type="NCBIfam" id="NF001267">
    <property type="entry name" value="PRK00228.1-2"/>
    <property type="match status" value="1"/>
</dbReference>
<dbReference type="PANTHER" id="PTHR30327">
    <property type="entry name" value="UNCHARACTERIZED PROTEIN YQGE"/>
    <property type="match status" value="1"/>
</dbReference>
<dbReference type="PANTHER" id="PTHR30327:SF1">
    <property type="entry name" value="UPF0301 PROTEIN YQGE"/>
    <property type="match status" value="1"/>
</dbReference>
<dbReference type="Pfam" id="PF02622">
    <property type="entry name" value="DUF179"/>
    <property type="match status" value="1"/>
</dbReference>
<dbReference type="SUPFAM" id="SSF143456">
    <property type="entry name" value="VC0467-like"/>
    <property type="match status" value="1"/>
</dbReference>
<evidence type="ECO:0000255" key="1">
    <source>
        <dbReference type="HAMAP-Rule" id="MF_00758"/>
    </source>
</evidence>
<evidence type="ECO:0000305" key="2"/>
<proteinExistence type="inferred from homology"/>
<accession>Q3JPG1</accession>
<reference key="1">
    <citation type="journal article" date="2010" name="Genome Biol. Evol.">
        <title>Continuing evolution of Burkholderia mallei through genome reduction and large-scale rearrangements.</title>
        <authorList>
            <person name="Losada L."/>
            <person name="Ronning C.M."/>
            <person name="DeShazer D."/>
            <person name="Woods D."/>
            <person name="Fedorova N."/>
            <person name="Kim H.S."/>
            <person name="Shabalina S.A."/>
            <person name="Pearson T.R."/>
            <person name="Brinkac L."/>
            <person name="Tan P."/>
            <person name="Nandi T."/>
            <person name="Crabtree J."/>
            <person name="Badger J."/>
            <person name="Beckstrom-Sternberg S."/>
            <person name="Saqib M."/>
            <person name="Schutzer S.E."/>
            <person name="Keim P."/>
            <person name="Nierman W.C."/>
        </authorList>
    </citation>
    <scope>NUCLEOTIDE SEQUENCE [LARGE SCALE GENOMIC DNA]</scope>
    <source>
        <strain>1710b</strain>
    </source>
</reference>
<sequence>MSKSSDRINLTNQFLIAMPNMADPTFSGTVVYLCDHSERGALGLVINRPTDIDLESLFNRIDLKLEIEPLLHIPVYFGGPVQTERGFVLHEPVEGSAYNSSMTVEGGLEMTTSKDVLEAVATGTGPKRFLLTLGHAGWGAGQLEEEISKNGWLTVAADPRIVFDTPAEERFEAALGLLGVSSSMLSGEAGHA</sequence>